<dbReference type="EC" id="7.1.2.2" evidence="2"/>
<dbReference type="EMBL" id="AF242564">
    <property type="protein sequence ID" value="AAA21991.1"/>
    <property type="molecule type" value="Genomic_DNA"/>
</dbReference>
<dbReference type="EMBL" id="BA000019">
    <property type="protein sequence ID" value="BAB77529.1"/>
    <property type="molecule type" value="Genomic_DNA"/>
</dbReference>
<dbReference type="PIR" id="AE1807">
    <property type="entry name" value="AE1807"/>
</dbReference>
<dbReference type="PIR" id="G31090">
    <property type="entry name" value="G31090"/>
</dbReference>
<dbReference type="RefSeq" id="WP_010994182.1">
    <property type="nucleotide sequence ID" value="NZ_RSCN01000005.1"/>
</dbReference>
<dbReference type="SMR" id="P12405"/>
<dbReference type="STRING" id="103690.gene:10492009"/>
<dbReference type="KEGG" id="ana:all0005"/>
<dbReference type="eggNOG" id="COG0056">
    <property type="taxonomic scope" value="Bacteria"/>
</dbReference>
<dbReference type="OrthoDB" id="9803053at2"/>
<dbReference type="Proteomes" id="UP000002483">
    <property type="component" value="Chromosome"/>
</dbReference>
<dbReference type="GO" id="GO:0031676">
    <property type="term" value="C:plasma membrane-derived thylakoid membrane"/>
    <property type="evidence" value="ECO:0007669"/>
    <property type="project" value="UniProtKB-SubCell"/>
</dbReference>
<dbReference type="GO" id="GO:0045259">
    <property type="term" value="C:proton-transporting ATP synthase complex"/>
    <property type="evidence" value="ECO:0007669"/>
    <property type="project" value="UniProtKB-KW"/>
</dbReference>
<dbReference type="GO" id="GO:0043531">
    <property type="term" value="F:ADP binding"/>
    <property type="evidence" value="ECO:0007669"/>
    <property type="project" value="TreeGrafter"/>
</dbReference>
<dbReference type="GO" id="GO:0005524">
    <property type="term" value="F:ATP binding"/>
    <property type="evidence" value="ECO:0007669"/>
    <property type="project" value="UniProtKB-UniRule"/>
</dbReference>
<dbReference type="GO" id="GO:0046933">
    <property type="term" value="F:proton-transporting ATP synthase activity, rotational mechanism"/>
    <property type="evidence" value="ECO:0007669"/>
    <property type="project" value="UniProtKB-UniRule"/>
</dbReference>
<dbReference type="CDD" id="cd18113">
    <property type="entry name" value="ATP-synt_F1_alpha_C"/>
    <property type="match status" value="1"/>
</dbReference>
<dbReference type="CDD" id="cd18116">
    <property type="entry name" value="ATP-synt_F1_alpha_N"/>
    <property type="match status" value="1"/>
</dbReference>
<dbReference type="CDD" id="cd01132">
    <property type="entry name" value="F1-ATPase_alpha_CD"/>
    <property type="match status" value="1"/>
</dbReference>
<dbReference type="FunFam" id="1.20.150.20:FF:000001">
    <property type="entry name" value="ATP synthase subunit alpha"/>
    <property type="match status" value="1"/>
</dbReference>
<dbReference type="FunFam" id="2.40.30.20:FF:000001">
    <property type="entry name" value="ATP synthase subunit alpha"/>
    <property type="match status" value="1"/>
</dbReference>
<dbReference type="FunFam" id="3.40.50.300:FF:000002">
    <property type="entry name" value="ATP synthase subunit alpha"/>
    <property type="match status" value="1"/>
</dbReference>
<dbReference type="Gene3D" id="2.40.30.20">
    <property type="match status" value="1"/>
</dbReference>
<dbReference type="Gene3D" id="1.20.150.20">
    <property type="entry name" value="ATP synthase alpha/beta chain, C-terminal domain"/>
    <property type="match status" value="1"/>
</dbReference>
<dbReference type="Gene3D" id="3.40.50.300">
    <property type="entry name" value="P-loop containing nucleotide triphosphate hydrolases"/>
    <property type="match status" value="1"/>
</dbReference>
<dbReference type="HAMAP" id="MF_01346">
    <property type="entry name" value="ATP_synth_alpha_bact"/>
    <property type="match status" value="1"/>
</dbReference>
<dbReference type="InterPro" id="IPR023366">
    <property type="entry name" value="ATP_synth_asu-like_sf"/>
</dbReference>
<dbReference type="InterPro" id="IPR000793">
    <property type="entry name" value="ATP_synth_asu_C"/>
</dbReference>
<dbReference type="InterPro" id="IPR038376">
    <property type="entry name" value="ATP_synth_asu_C_sf"/>
</dbReference>
<dbReference type="InterPro" id="IPR033732">
    <property type="entry name" value="ATP_synth_F1_a_nt-bd_dom"/>
</dbReference>
<dbReference type="InterPro" id="IPR005294">
    <property type="entry name" value="ATP_synth_F1_asu"/>
</dbReference>
<dbReference type="InterPro" id="IPR020003">
    <property type="entry name" value="ATPase_a/bsu_AS"/>
</dbReference>
<dbReference type="InterPro" id="IPR004100">
    <property type="entry name" value="ATPase_F1/V1/A1_a/bsu_N"/>
</dbReference>
<dbReference type="InterPro" id="IPR036121">
    <property type="entry name" value="ATPase_F1/V1/A1_a/bsu_N_sf"/>
</dbReference>
<dbReference type="InterPro" id="IPR000194">
    <property type="entry name" value="ATPase_F1/V1/A1_a/bsu_nucl-bd"/>
</dbReference>
<dbReference type="InterPro" id="IPR027417">
    <property type="entry name" value="P-loop_NTPase"/>
</dbReference>
<dbReference type="NCBIfam" id="TIGR00962">
    <property type="entry name" value="atpA"/>
    <property type="match status" value="1"/>
</dbReference>
<dbReference type="NCBIfam" id="NF009884">
    <property type="entry name" value="PRK13343.1"/>
    <property type="match status" value="1"/>
</dbReference>
<dbReference type="PANTHER" id="PTHR48082">
    <property type="entry name" value="ATP SYNTHASE SUBUNIT ALPHA, MITOCHONDRIAL"/>
    <property type="match status" value="1"/>
</dbReference>
<dbReference type="PANTHER" id="PTHR48082:SF2">
    <property type="entry name" value="ATP SYNTHASE SUBUNIT ALPHA, MITOCHONDRIAL"/>
    <property type="match status" value="1"/>
</dbReference>
<dbReference type="Pfam" id="PF00006">
    <property type="entry name" value="ATP-synt_ab"/>
    <property type="match status" value="1"/>
</dbReference>
<dbReference type="Pfam" id="PF00306">
    <property type="entry name" value="ATP-synt_ab_C"/>
    <property type="match status" value="1"/>
</dbReference>
<dbReference type="Pfam" id="PF02874">
    <property type="entry name" value="ATP-synt_ab_N"/>
    <property type="match status" value="1"/>
</dbReference>
<dbReference type="PIRSF" id="PIRSF039088">
    <property type="entry name" value="F_ATPase_subunit_alpha"/>
    <property type="match status" value="1"/>
</dbReference>
<dbReference type="SUPFAM" id="SSF47917">
    <property type="entry name" value="C-terminal domain of alpha and beta subunits of F1 ATP synthase"/>
    <property type="match status" value="1"/>
</dbReference>
<dbReference type="SUPFAM" id="SSF50615">
    <property type="entry name" value="N-terminal domain of alpha and beta subunits of F1 ATP synthase"/>
    <property type="match status" value="1"/>
</dbReference>
<dbReference type="SUPFAM" id="SSF52540">
    <property type="entry name" value="P-loop containing nucleoside triphosphate hydrolases"/>
    <property type="match status" value="1"/>
</dbReference>
<dbReference type="PROSITE" id="PS00152">
    <property type="entry name" value="ATPASE_ALPHA_BETA"/>
    <property type="match status" value="1"/>
</dbReference>
<feature type="chain" id="PRO_0000144312" description="ATP synthase subunit alpha">
    <location>
        <begin position="1"/>
        <end position="506"/>
    </location>
</feature>
<feature type="binding site" evidence="2">
    <location>
        <begin position="171"/>
        <end position="178"/>
    </location>
    <ligand>
        <name>ATP</name>
        <dbReference type="ChEBI" id="CHEBI:30616"/>
    </ligand>
</feature>
<feature type="site" description="Required for activity" evidence="2">
    <location>
        <position position="364"/>
    </location>
</feature>
<feature type="sequence conflict" description="In Ref. 1; AAA21991." evidence="3" ref="1">
    <original>R</original>
    <variation>G</variation>
    <location>
        <position position="285"/>
    </location>
</feature>
<accession>P12405</accession>
<keyword id="KW-0066">ATP synthesis</keyword>
<keyword id="KW-0067">ATP-binding</keyword>
<keyword id="KW-0139">CF(1)</keyword>
<keyword id="KW-0375">Hydrogen ion transport</keyword>
<keyword id="KW-0406">Ion transport</keyword>
<keyword id="KW-0472">Membrane</keyword>
<keyword id="KW-0547">Nucleotide-binding</keyword>
<keyword id="KW-1185">Reference proteome</keyword>
<keyword id="KW-0793">Thylakoid</keyword>
<keyword id="KW-1278">Translocase</keyword>
<keyword id="KW-0813">Transport</keyword>
<reference key="1">
    <citation type="journal article" date="1988" name="J. Bacteriol.">
        <title>Genes encoding the alpha, gamma, delta, and four F0 subunits of ATP synthase constitute an operon in the cyanobacterium Anabaena sp. strain PCC 7120.</title>
        <authorList>
            <person name="McCarn D.F."/>
            <person name="Whitaker R.A."/>
            <person name="Alam J."/>
            <person name="Vrba J.M."/>
            <person name="Curtis S.E."/>
        </authorList>
    </citation>
    <scope>NUCLEOTIDE SEQUENCE [GENOMIC DNA]</scope>
</reference>
<reference key="2">
    <citation type="journal article" date="2001" name="DNA Res.">
        <title>Complete genomic sequence of the filamentous nitrogen-fixing cyanobacterium Anabaena sp. strain PCC 7120.</title>
        <authorList>
            <person name="Kaneko T."/>
            <person name="Nakamura Y."/>
            <person name="Wolk C.P."/>
            <person name="Kuritz T."/>
            <person name="Sasamoto S."/>
            <person name="Watanabe A."/>
            <person name="Iriguchi M."/>
            <person name="Ishikawa A."/>
            <person name="Kawashima K."/>
            <person name="Kimura T."/>
            <person name="Kishida Y."/>
            <person name="Kohara M."/>
            <person name="Matsumoto M."/>
            <person name="Matsuno A."/>
            <person name="Muraki A."/>
            <person name="Nakazaki N."/>
            <person name="Shimpo S."/>
            <person name="Sugimoto M."/>
            <person name="Takazawa M."/>
            <person name="Yamada M."/>
            <person name="Yasuda M."/>
            <person name="Tabata S."/>
        </authorList>
    </citation>
    <scope>NUCLEOTIDE SEQUENCE [LARGE SCALE GENOMIC DNA]</scope>
    <source>
        <strain>PCC 7120 / SAG 25.82 / UTEX 2576</strain>
    </source>
</reference>
<proteinExistence type="inferred from homology"/>
<sequence>MSISIRPDEISSIIQQQIEQYDQEVKVANVGTVLQVGDGIARIYGLEKAMAGELLEFEDGTVGIAQNLEEDNVGAVLMGEGREIQEGSTVTATGRIAQIGVGEALIGRVVDALGRAIDGKGDIKASESRLIESPAPGIIARRSVHEPMQTGITAIDSMIPIGRGQRELIIGDRQTGKTAIAIDTIINQKGEDVVCVYVAIGQKASTVANVVQTLQEKGAMDYTVVVAAGASEPATLQFLAPYTGATIAEYFMYKGKATLVIYDDLSKQAQAYRQMSLLLRRPPGREAYPGDVFYIHSRLLERAAKLSDELGKGSMTALPIIETQAGDVSAYIPTNVISITDGQIFLSSDLFNAGIRPAVNPGISVSRVGSAAQTKAMKKVAGKIKLELAQFDDLQAFAQFASDLDKATQDQLARGQRLRELLKQSQNQPLSVAEQVAILYAGINGYLDDIPVDKVTTFTKGLRDYLKSGVNPYFQDVQSKKALGDDEEKALKAALEDYKKTFKATA</sequence>
<organism>
    <name type="scientific">Nostoc sp. (strain PCC 7120 / SAG 25.82 / UTEX 2576)</name>
    <dbReference type="NCBI Taxonomy" id="103690"/>
    <lineage>
        <taxon>Bacteria</taxon>
        <taxon>Bacillati</taxon>
        <taxon>Cyanobacteriota</taxon>
        <taxon>Cyanophyceae</taxon>
        <taxon>Nostocales</taxon>
        <taxon>Nostocaceae</taxon>
        <taxon>Nostoc</taxon>
    </lineage>
</organism>
<name>ATPA_NOSS1</name>
<gene>
    <name evidence="2" type="primary">atpA</name>
    <name type="ordered locus">all0005</name>
</gene>
<evidence type="ECO:0000250" key="1"/>
<evidence type="ECO:0000255" key="2">
    <source>
        <dbReference type="HAMAP-Rule" id="MF_01346"/>
    </source>
</evidence>
<evidence type="ECO:0000305" key="3"/>
<protein>
    <recommendedName>
        <fullName evidence="2">ATP synthase subunit alpha</fullName>
        <ecNumber evidence="2">7.1.2.2</ecNumber>
    </recommendedName>
    <alternativeName>
        <fullName evidence="2">ATP synthase F1 sector subunit alpha</fullName>
    </alternativeName>
    <alternativeName>
        <fullName evidence="2">F-ATPase subunit alpha</fullName>
    </alternativeName>
</protein>
<comment type="function">
    <text>Produces ATP from ADP in the presence of a proton gradient across the membrane. The alpha chain is a regulatory subunit.</text>
</comment>
<comment type="catalytic activity">
    <reaction evidence="2">
        <text>ATP + H2O + 4 H(+)(in) = ADP + phosphate + 5 H(+)(out)</text>
        <dbReference type="Rhea" id="RHEA:57720"/>
        <dbReference type="ChEBI" id="CHEBI:15377"/>
        <dbReference type="ChEBI" id="CHEBI:15378"/>
        <dbReference type="ChEBI" id="CHEBI:30616"/>
        <dbReference type="ChEBI" id="CHEBI:43474"/>
        <dbReference type="ChEBI" id="CHEBI:456216"/>
        <dbReference type="EC" id="7.1.2.2"/>
    </reaction>
</comment>
<comment type="subunit">
    <text evidence="1">F-type ATPases have 2 components, CF(1) - the catalytic core - and CF(0) - the membrane proton channel. CF(1) has five subunits: alpha(3), beta(3), gamma(1), delta(1), epsilon(1). CF(0) has four main subunits: a(1), b(1), b'(1) and c(9-12) (By similarity).</text>
</comment>
<comment type="subcellular location">
    <subcellularLocation>
        <location evidence="2">Cellular thylakoid membrane</location>
        <topology evidence="2">Peripheral membrane protein</topology>
    </subcellularLocation>
</comment>
<comment type="similarity">
    <text evidence="2">Belongs to the ATPase alpha/beta chains family.</text>
</comment>